<name>RL7_CLOP1</name>
<sequence>MTKEQIIEAIKEMSVLELNELVKACEEEFGVSAAAPVAVVGGAAAGAAAEEKSEFDVVLTNAGANKIKVIKAVRELTGLGLKEAKEIVDGAPKTLKEAVAKEEAEDMKAKLAEVGAEVELK</sequence>
<keyword id="KW-0687">Ribonucleoprotein</keyword>
<keyword id="KW-0689">Ribosomal protein</keyword>
<proteinExistence type="inferred from homology"/>
<accession>Q0TMN7</accession>
<reference key="1">
    <citation type="journal article" date="2006" name="Genome Res.">
        <title>Skewed genomic variability in strains of the toxigenic bacterial pathogen, Clostridium perfringens.</title>
        <authorList>
            <person name="Myers G.S.A."/>
            <person name="Rasko D.A."/>
            <person name="Cheung J.K."/>
            <person name="Ravel J."/>
            <person name="Seshadri R."/>
            <person name="DeBoy R.T."/>
            <person name="Ren Q."/>
            <person name="Varga J."/>
            <person name="Awad M.M."/>
            <person name="Brinkac L.M."/>
            <person name="Daugherty S.C."/>
            <person name="Haft D.H."/>
            <person name="Dodson R.J."/>
            <person name="Madupu R."/>
            <person name="Nelson W.C."/>
            <person name="Rosovitz M.J."/>
            <person name="Sullivan S.A."/>
            <person name="Khouri H."/>
            <person name="Dimitrov G.I."/>
            <person name="Watkins K.L."/>
            <person name="Mulligan S."/>
            <person name="Benton J."/>
            <person name="Radune D."/>
            <person name="Fisher D.J."/>
            <person name="Atkins H.S."/>
            <person name="Hiscox T."/>
            <person name="Jost B.H."/>
            <person name="Billington S.J."/>
            <person name="Songer J.G."/>
            <person name="McClane B.A."/>
            <person name="Titball R.W."/>
            <person name="Rood J.I."/>
            <person name="Melville S.B."/>
            <person name="Paulsen I.T."/>
        </authorList>
    </citation>
    <scope>NUCLEOTIDE SEQUENCE [LARGE SCALE GENOMIC DNA]</scope>
    <source>
        <strain>ATCC 13124 / DSM 756 / JCM 1290 / NCIMB 6125 / NCTC 8237 / S 107 / Type A</strain>
    </source>
</reference>
<gene>
    <name evidence="1" type="primary">rplL</name>
    <name type="ordered locus">CPF_2723</name>
</gene>
<evidence type="ECO:0000255" key="1">
    <source>
        <dbReference type="HAMAP-Rule" id="MF_00368"/>
    </source>
</evidence>
<evidence type="ECO:0000305" key="2"/>
<organism>
    <name type="scientific">Clostridium perfringens (strain ATCC 13124 / DSM 756 / JCM 1290 / NCIMB 6125 / NCTC 8237 / Type A)</name>
    <dbReference type="NCBI Taxonomy" id="195103"/>
    <lineage>
        <taxon>Bacteria</taxon>
        <taxon>Bacillati</taxon>
        <taxon>Bacillota</taxon>
        <taxon>Clostridia</taxon>
        <taxon>Eubacteriales</taxon>
        <taxon>Clostridiaceae</taxon>
        <taxon>Clostridium</taxon>
    </lineage>
</organism>
<dbReference type="EMBL" id="CP000246">
    <property type="protein sequence ID" value="ABG84812.1"/>
    <property type="molecule type" value="Genomic_DNA"/>
</dbReference>
<dbReference type="RefSeq" id="WP_003452170.1">
    <property type="nucleotide sequence ID" value="NC_008261.1"/>
</dbReference>
<dbReference type="SMR" id="Q0TMN7"/>
<dbReference type="STRING" id="195103.CPF_2723"/>
<dbReference type="PaxDb" id="195103-CPF_2723"/>
<dbReference type="GeneID" id="93001000"/>
<dbReference type="KEGG" id="cpf:CPF_2723"/>
<dbReference type="eggNOG" id="COG0222">
    <property type="taxonomic scope" value="Bacteria"/>
</dbReference>
<dbReference type="HOGENOM" id="CLU_086499_3_2_9"/>
<dbReference type="Proteomes" id="UP000001823">
    <property type="component" value="Chromosome"/>
</dbReference>
<dbReference type="GO" id="GO:0022625">
    <property type="term" value="C:cytosolic large ribosomal subunit"/>
    <property type="evidence" value="ECO:0007669"/>
    <property type="project" value="TreeGrafter"/>
</dbReference>
<dbReference type="GO" id="GO:0003729">
    <property type="term" value="F:mRNA binding"/>
    <property type="evidence" value="ECO:0007669"/>
    <property type="project" value="TreeGrafter"/>
</dbReference>
<dbReference type="GO" id="GO:0003735">
    <property type="term" value="F:structural constituent of ribosome"/>
    <property type="evidence" value="ECO:0007669"/>
    <property type="project" value="InterPro"/>
</dbReference>
<dbReference type="GO" id="GO:0006412">
    <property type="term" value="P:translation"/>
    <property type="evidence" value="ECO:0007669"/>
    <property type="project" value="UniProtKB-UniRule"/>
</dbReference>
<dbReference type="CDD" id="cd00387">
    <property type="entry name" value="Ribosomal_L7_L12"/>
    <property type="match status" value="1"/>
</dbReference>
<dbReference type="FunFam" id="1.20.5.710:FF:000002">
    <property type="entry name" value="50S ribosomal protein L7/L12"/>
    <property type="match status" value="1"/>
</dbReference>
<dbReference type="FunFam" id="3.30.1390.10:FF:000001">
    <property type="entry name" value="50S ribosomal protein L7/L12"/>
    <property type="match status" value="1"/>
</dbReference>
<dbReference type="Gene3D" id="3.30.1390.10">
    <property type="match status" value="1"/>
</dbReference>
<dbReference type="Gene3D" id="1.20.5.710">
    <property type="entry name" value="Single helix bin"/>
    <property type="match status" value="1"/>
</dbReference>
<dbReference type="HAMAP" id="MF_00368">
    <property type="entry name" value="Ribosomal_bL12"/>
    <property type="match status" value="1"/>
</dbReference>
<dbReference type="InterPro" id="IPR000206">
    <property type="entry name" value="Ribosomal_bL12"/>
</dbReference>
<dbReference type="InterPro" id="IPR013823">
    <property type="entry name" value="Ribosomal_bL12_C"/>
</dbReference>
<dbReference type="InterPro" id="IPR014719">
    <property type="entry name" value="Ribosomal_bL12_C/ClpS-like"/>
</dbReference>
<dbReference type="InterPro" id="IPR008932">
    <property type="entry name" value="Ribosomal_bL12_oligo"/>
</dbReference>
<dbReference type="InterPro" id="IPR036235">
    <property type="entry name" value="Ribosomal_bL12_oligo_N_sf"/>
</dbReference>
<dbReference type="NCBIfam" id="TIGR00855">
    <property type="entry name" value="L12"/>
    <property type="match status" value="1"/>
</dbReference>
<dbReference type="PANTHER" id="PTHR45987">
    <property type="entry name" value="39S RIBOSOMAL PROTEIN L12"/>
    <property type="match status" value="1"/>
</dbReference>
<dbReference type="PANTHER" id="PTHR45987:SF4">
    <property type="entry name" value="LARGE RIBOSOMAL SUBUNIT PROTEIN BL12M"/>
    <property type="match status" value="1"/>
</dbReference>
<dbReference type="Pfam" id="PF00542">
    <property type="entry name" value="Ribosomal_L12"/>
    <property type="match status" value="1"/>
</dbReference>
<dbReference type="Pfam" id="PF16320">
    <property type="entry name" value="Ribosomal_L12_N"/>
    <property type="match status" value="1"/>
</dbReference>
<dbReference type="SUPFAM" id="SSF54736">
    <property type="entry name" value="ClpS-like"/>
    <property type="match status" value="1"/>
</dbReference>
<dbReference type="SUPFAM" id="SSF48300">
    <property type="entry name" value="Ribosomal protein L7/12, oligomerisation (N-terminal) domain"/>
    <property type="match status" value="1"/>
</dbReference>
<protein>
    <recommendedName>
        <fullName evidence="1">Large ribosomal subunit protein bL12</fullName>
    </recommendedName>
    <alternativeName>
        <fullName evidence="2">50S ribosomal protein L7/L12</fullName>
    </alternativeName>
</protein>
<feature type="chain" id="PRO_1000006993" description="Large ribosomal subunit protein bL12">
    <location>
        <begin position="1"/>
        <end position="121"/>
    </location>
</feature>
<comment type="function">
    <text evidence="1">Forms part of the ribosomal stalk which helps the ribosome interact with GTP-bound translation factors. Is thus essential for accurate translation.</text>
</comment>
<comment type="subunit">
    <text evidence="1">Homodimer. Part of the ribosomal stalk of the 50S ribosomal subunit. Forms a multimeric L10(L12)X complex, where L10 forms an elongated spine to which 2 to 4 L12 dimers bind in a sequential fashion. Binds GTP-bound translation factors.</text>
</comment>
<comment type="similarity">
    <text evidence="1">Belongs to the bacterial ribosomal protein bL12 family.</text>
</comment>